<comment type="function">
    <text evidence="3 4 5 6 8 9">Transporter that mediates resorption of neutral amino acids across the apical membrane of renal and intestinal epithelial cells (PubMed:15286787, PubMed:15286788, PubMed:18424768, PubMed:18484095, PubMed:19185582, PubMed:26240152). This uptake is sodium-dependent and chloride-independent (PubMed:15286787, PubMed:15286788, PubMed:19185582). Requires CLTRN in kidney or ACE2 in intestine for cell surface expression and amino acid transporter activity (PubMed:18424768, PubMed:19185582).</text>
</comment>
<comment type="catalytic activity">
    <reaction evidence="3 4">
        <text>L-alanine(in) + Na(+)(in) = L-alanine(out) + Na(+)(out)</text>
        <dbReference type="Rhea" id="RHEA:29283"/>
        <dbReference type="ChEBI" id="CHEBI:29101"/>
        <dbReference type="ChEBI" id="CHEBI:57972"/>
    </reaction>
</comment>
<comment type="catalytic activity">
    <reaction evidence="3">
        <text>L-cysteine(in) + Na(+)(in) = L-cysteine(out) + Na(+)(out)</text>
        <dbReference type="Rhea" id="RHEA:68232"/>
        <dbReference type="ChEBI" id="CHEBI:29101"/>
        <dbReference type="ChEBI" id="CHEBI:35235"/>
    </reaction>
</comment>
<comment type="catalytic activity">
    <reaction evidence="3 4">
        <text>L-glutamine(in) + Na(+)(in) = L-glutamine(out) + Na(+)(out)</text>
        <dbReference type="Rhea" id="RHEA:68236"/>
        <dbReference type="ChEBI" id="CHEBI:29101"/>
        <dbReference type="ChEBI" id="CHEBI:58359"/>
    </reaction>
</comment>
<comment type="catalytic activity">
    <reaction evidence="3">
        <text>glycine(in) + Na(+)(in) = glycine(out) + Na(+)(out)</text>
        <dbReference type="Rhea" id="RHEA:68228"/>
        <dbReference type="ChEBI" id="CHEBI:29101"/>
        <dbReference type="ChEBI" id="CHEBI:57305"/>
    </reaction>
</comment>
<comment type="catalytic activity">
    <reaction evidence="3">
        <text>L-isoleucine(in) + Na(+)(in) = L-isoleucine(out) + Na(+)(out)</text>
        <dbReference type="Rhea" id="RHEA:29275"/>
        <dbReference type="ChEBI" id="CHEBI:29101"/>
        <dbReference type="ChEBI" id="CHEBI:58045"/>
    </reaction>
</comment>
<comment type="catalytic activity">
    <reaction evidence="3 4">
        <text>L-leucine(in) + Na(+)(in) = L-leucine(out) + Na(+)(out)</text>
        <dbReference type="Rhea" id="RHEA:29263"/>
        <dbReference type="ChEBI" id="CHEBI:29101"/>
        <dbReference type="ChEBI" id="CHEBI:57427"/>
    </reaction>
</comment>
<comment type="catalytic activity">
    <reaction evidence="3">
        <text>L-methionine(in) + Na(+)(in) = L-methionine(out) + Na(+)(out)</text>
        <dbReference type="Rhea" id="RHEA:68240"/>
        <dbReference type="ChEBI" id="CHEBI:29101"/>
        <dbReference type="ChEBI" id="CHEBI:57844"/>
    </reaction>
</comment>
<comment type="catalytic activity">
    <reaction evidence="3 4">
        <text>L-phenylalanine(in) + Na(+)(in) = L-phenylalanine(out) + Na(+)(out)</text>
        <dbReference type="Rhea" id="RHEA:68244"/>
        <dbReference type="ChEBI" id="CHEBI:29101"/>
        <dbReference type="ChEBI" id="CHEBI:58095"/>
    </reaction>
</comment>
<comment type="catalytic activity">
    <reaction evidence="3">
        <text>L-serine(in) + Na(+)(in) = L-serine(out) + Na(+)(out)</text>
        <dbReference type="Rhea" id="RHEA:29575"/>
        <dbReference type="ChEBI" id="CHEBI:29101"/>
        <dbReference type="ChEBI" id="CHEBI:33384"/>
    </reaction>
</comment>
<comment type="catalytic activity">
    <reaction evidence="3">
        <text>L-tryptophan(in) + Na(+)(in) = L-tryptophan(out) + Na(+)(out)</text>
        <dbReference type="Rhea" id="RHEA:68252"/>
        <dbReference type="ChEBI" id="CHEBI:29101"/>
        <dbReference type="ChEBI" id="CHEBI:57912"/>
    </reaction>
</comment>
<comment type="catalytic activity">
    <reaction evidence="3">
        <text>L-tyrosine(in) + Na(+)(in) = L-tyrosine(out) + Na(+)(out)</text>
        <dbReference type="Rhea" id="RHEA:68248"/>
        <dbReference type="ChEBI" id="CHEBI:29101"/>
        <dbReference type="ChEBI" id="CHEBI:58315"/>
    </reaction>
</comment>
<comment type="catalytic activity">
    <reaction evidence="3">
        <text>L-valine(in) + Na(+)(in) = L-valine(out) + Na(+)(out)</text>
        <dbReference type="Rhea" id="RHEA:29267"/>
        <dbReference type="ChEBI" id="CHEBI:29101"/>
        <dbReference type="ChEBI" id="CHEBI:57762"/>
    </reaction>
</comment>
<comment type="subunit">
    <text evidence="1 10">Interacts in a tissue-specific manner with ACE2 in small intestine and with CLTRN in the kidney (By similarity). Interacts with CLTRN; this interaction is required for trafficking of SLC6A19 to the plasma membrane and for its catalytic activation in kidneys (By similarity). Interacts with ACE2; this interaction is required for trafficking of SLC6A19 to the plasma membrane and for its catalytic activation in intestine (PubMed:32132184). Interacts with ANPEP; the interaction positively regulates its amino acid transporter activity (By similarity).</text>
</comment>
<comment type="interaction">
    <interactant intactId="EBI-25475705">
        <id>Q695T7</id>
    </interactant>
    <interactant intactId="EBI-7730807">
        <id>Q9BYF1</id>
        <label>ACE2</label>
    </interactant>
    <organismsDiffer>false</organismsDiffer>
    <experiments>4</experiments>
</comment>
<comment type="subcellular location">
    <subcellularLocation>
        <location evidence="8 9">Cell membrane</location>
        <topology evidence="2">Multi-pass membrane protein</topology>
    </subcellularLocation>
    <subcellularLocation>
        <location evidence="5">Apical cell membrane</location>
        <topology evidence="2">Multi-pass membrane protein</topology>
    </subcellularLocation>
    <text evidence="5">Colocalizes with ACE2 on the apical membrane of cells lining villi of the jejunum, ileum and on kidney proximal tubules.</text>
</comment>
<comment type="tissue specificity">
    <text evidence="3 4 5">Robust expression in kidney and small intestine, with minimal expression in pancreas (PubMed:15286787, PubMed:18424768). Also expressed in stomach, liver, duodenum, ileocecum, colon and prostate. Not detected in testis, whole brain, cerebellum, fetal liver, spleen, skeletal muscle, uterus, heart or lung.</text>
</comment>
<comment type="disease" evidence="3 4 5 6 8">
    <disease id="DI-01695">
        <name>Hartnup disorder</name>
        <acronym>HND</acronym>
        <description>Autosomal recessive abnormality of renal and gastrointestinal neutral amino acid transport noted for its clinical variability. First described in 1956, HND is characterized by increases in the urinary and intestinal excretion of neutral amino acids. Individuals with typical Hartnup aminoaciduria may be asymptomatic, some develop a photosensitive pellagra-like rash, attacks of cerebellar ataxia and other neurological or psychiatric features. Although the definition of HND was originally based on clinical and biochemical abnormalities, its marked clinical heterogeneity has led to it being known as a disorder with a consistent pathognomonic neutral hyperaminoaciduria.</description>
        <dbReference type="MIM" id="234500"/>
    </disease>
    <text>The disease is caused by variants affecting the gene represented in this entry.</text>
</comment>
<comment type="disease" evidence="7">
    <disease id="DI-02939">
        <name>Hyperglycinuria</name>
        <acronym>HGLY</acronym>
        <description>A condition characterized by excess of glycine in the urine. In some cases it is associated with renal colic and renal oxalate stones.</description>
        <dbReference type="MIM" id="138500"/>
    </disease>
    <text>The disease may be caused by variants affecting the gene represented in this entry. SLC6A19 deficiency combined with haploinsufficiency of SLC6A20 or partially inactivating mutations in SLC36A2, can be responsible for hyperglycinuria.</text>
</comment>
<comment type="disease" evidence="7">
    <disease id="DI-02940">
        <name>Iminoglycinuria</name>
        <acronym>IG</acronym>
        <description>A disorder of renal tubular reabsorption of glycine and imino acids (proline and hydroxyproline), marked by excessive levels of all three substances in the urine.</description>
        <dbReference type="MIM" id="242600"/>
    </disease>
    <text>The disease may be caused by variants affecting the gene represented in this entry. SLC6A19 deficiency combined with haploinsufficiency of SLC6A20 or partially inactivating mutations in SLC36A2, can be responsible for iminoglycinuria. Additional polymorphisms and mutations in SLC6A18 can contribute to the IG phenotype in some families.</text>
</comment>
<comment type="similarity">
    <text evidence="11">Belongs to the sodium:neurotransmitter symporter (SNF) (TC 2.A.22) family. SLC6A19 subfamily.</text>
</comment>
<dbReference type="EMBL" id="AY596807">
    <property type="protein sequence ID" value="AAT42127.1"/>
    <property type="molecule type" value="mRNA"/>
</dbReference>
<dbReference type="EMBL" id="AY591756">
    <property type="protein sequence ID" value="AAT66171.1"/>
    <property type="molecule type" value="mRNA"/>
</dbReference>
<dbReference type="EMBL" id="AK290811">
    <property type="protein sequence ID" value="BAF83500.1"/>
    <property type="molecule type" value="mRNA"/>
</dbReference>
<dbReference type="EMBL" id="CH471102">
    <property type="protein sequence ID" value="EAX08175.1"/>
    <property type="molecule type" value="Genomic_DNA"/>
</dbReference>
<dbReference type="CCDS" id="CCDS34130.1"/>
<dbReference type="RefSeq" id="NP_001003841.1">
    <property type="nucleotide sequence ID" value="NM_001003841.3"/>
</dbReference>
<dbReference type="RefSeq" id="XP_054208476.1">
    <property type="nucleotide sequence ID" value="XM_054352501.1"/>
</dbReference>
<dbReference type="PDB" id="6M17">
    <property type="method" value="EM"/>
    <property type="resolution" value="2.90 A"/>
    <property type="chains" value="A/C=2-634"/>
</dbReference>
<dbReference type="PDB" id="6M18">
    <property type="method" value="EM"/>
    <property type="resolution" value="2.90 A"/>
    <property type="chains" value="A/C=2-634"/>
</dbReference>
<dbReference type="PDB" id="6M1D">
    <property type="method" value="EM"/>
    <property type="resolution" value="4.50 A"/>
    <property type="chains" value="A/C=2-634"/>
</dbReference>
<dbReference type="PDB" id="7DWX">
    <property type="method" value="EM"/>
    <property type="resolution" value="8.30 A"/>
    <property type="chains" value="A/C=2-634"/>
</dbReference>
<dbReference type="PDB" id="7V61">
    <property type="method" value="EM"/>
    <property type="resolution" value="3.20 A"/>
    <property type="chains" value="A/C=2-634"/>
</dbReference>
<dbReference type="PDB" id="8I92">
    <property type="method" value="EM"/>
    <property type="resolution" value="3.20 A"/>
    <property type="chains" value="B/D=5-609"/>
</dbReference>
<dbReference type="PDB" id="8I93">
    <property type="method" value="EM"/>
    <property type="resolution" value="3.10 A"/>
    <property type="chains" value="B/D=2-633"/>
</dbReference>
<dbReference type="PDB" id="8WBY">
    <property type="method" value="EM"/>
    <property type="resolution" value="3.18 A"/>
    <property type="chains" value="A/D=2-634"/>
</dbReference>
<dbReference type="PDB" id="8WBZ">
    <property type="method" value="EM"/>
    <property type="resolution" value="3.20 A"/>
    <property type="chains" value="A/D=2-634"/>
</dbReference>
<dbReference type="PDBsum" id="6M17"/>
<dbReference type="PDBsum" id="6M18"/>
<dbReference type="PDBsum" id="6M1D"/>
<dbReference type="PDBsum" id="7DWX"/>
<dbReference type="PDBsum" id="7V61"/>
<dbReference type="PDBsum" id="8I92"/>
<dbReference type="PDBsum" id="8I93"/>
<dbReference type="PDBsum" id="8WBY"/>
<dbReference type="PDBsum" id="8WBZ"/>
<dbReference type="EMDB" id="EMD-30039"/>
<dbReference type="EMDB" id="EMD-30040"/>
<dbReference type="EMDB" id="EMD-30041"/>
<dbReference type="EMDB" id="EMD-30888"/>
<dbReference type="EMDB" id="EMD-31732"/>
<dbReference type="EMDB" id="EMD-35255"/>
<dbReference type="EMDB" id="EMD-35256"/>
<dbReference type="EMDB" id="EMD-37427"/>
<dbReference type="EMDB" id="EMD-37428"/>
<dbReference type="SMR" id="Q695T7"/>
<dbReference type="BioGRID" id="130985">
    <property type="interactions" value="1"/>
</dbReference>
<dbReference type="ComplexPortal" id="CPX-5684">
    <property type="entry name" value="SARS-CoV-2 Spike - human ACE2-SLC6A19 complex"/>
</dbReference>
<dbReference type="ComplexPortal" id="CPX-8191">
    <property type="entry name" value="B(0)AT1-Collectrin heteromeric amino acid transporter complex"/>
</dbReference>
<dbReference type="ComplexPortal" id="CPX-8192">
    <property type="entry name" value="B(0)AT1-ACE2 heteromeric amino acid transporter complex"/>
</dbReference>
<dbReference type="CORUM" id="Q695T7"/>
<dbReference type="FunCoup" id="Q695T7">
    <property type="interactions" value="112"/>
</dbReference>
<dbReference type="IntAct" id="Q695T7">
    <property type="interactions" value="1"/>
</dbReference>
<dbReference type="STRING" id="9606.ENSP00000305302"/>
<dbReference type="DrugCentral" id="Q695T7"/>
<dbReference type="GuidetoPHARMACOLOGY" id="939"/>
<dbReference type="TCDB" id="2.A.22.6.3">
    <property type="family name" value="the neurotransmitter:sodium symporter (nss) family"/>
</dbReference>
<dbReference type="GlyCosmos" id="Q695T7">
    <property type="glycosylation" value="5 sites, No reported glycans"/>
</dbReference>
<dbReference type="GlyGen" id="Q695T7">
    <property type="glycosylation" value="5 sites"/>
</dbReference>
<dbReference type="iPTMnet" id="Q695T7"/>
<dbReference type="PhosphoSitePlus" id="Q695T7"/>
<dbReference type="BioMuta" id="SLC6A19"/>
<dbReference type="DMDM" id="73919285"/>
<dbReference type="MassIVE" id="Q695T7"/>
<dbReference type="PaxDb" id="9606-ENSP00000305302"/>
<dbReference type="PeptideAtlas" id="Q695T7"/>
<dbReference type="ProteomicsDB" id="66151"/>
<dbReference type="Antibodypedia" id="22313">
    <property type="antibodies" value="68 antibodies from 22 providers"/>
</dbReference>
<dbReference type="DNASU" id="340024"/>
<dbReference type="Ensembl" id="ENST00000304460.11">
    <property type="protein sequence ID" value="ENSP00000305302.10"/>
    <property type="gene ID" value="ENSG00000174358.16"/>
</dbReference>
<dbReference type="GeneID" id="340024"/>
<dbReference type="KEGG" id="hsa:340024"/>
<dbReference type="MANE-Select" id="ENST00000304460.11">
    <property type="protein sequence ID" value="ENSP00000305302.10"/>
    <property type="RefSeq nucleotide sequence ID" value="NM_001003841.3"/>
    <property type="RefSeq protein sequence ID" value="NP_001003841.1"/>
</dbReference>
<dbReference type="UCSC" id="uc003jbw.5">
    <property type="organism name" value="human"/>
</dbReference>
<dbReference type="AGR" id="HGNC:27960"/>
<dbReference type="CTD" id="340024"/>
<dbReference type="DisGeNET" id="340024"/>
<dbReference type="GeneCards" id="SLC6A19"/>
<dbReference type="HGNC" id="HGNC:27960">
    <property type="gene designation" value="SLC6A19"/>
</dbReference>
<dbReference type="HPA" id="ENSG00000174358">
    <property type="expression patterns" value="Group enriched (intestine, kidney)"/>
</dbReference>
<dbReference type="MalaCards" id="SLC6A19"/>
<dbReference type="MIM" id="138500">
    <property type="type" value="phenotype"/>
</dbReference>
<dbReference type="MIM" id="234500">
    <property type="type" value="phenotype"/>
</dbReference>
<dbReference type="MIM" id="242600">
    <property type="type" value="phenotype"/>
</dbReference>
<dbReference type="MIM" id="608893">
    <property type="type" value="gene"/>
</dbReference>
<dbReference type="neXtProt" id="NX_Q695T7"/>
<dbReference type="OpenTargets" id="ENSG00000174358"/>
<dbReference type="Orphanet" id="2116">
    <property type="disease" value="Hartnup disease"/>
</dbReference>
<dbReference type="Orphanet" id="42062">
    <property type="disease" value="Iminoglycinuria"/>
</dbReference>
<dbReference type="PharmGKB" id="PA134968815"/>
<dbReference type="VEuPathDB" id="HostDB:ENSG00000174358"/>
<dbReference type="eggNOG" id="KOG3659">
    <property type="taxonomic scope" value="Eukaryota"/>
</dbReference>
<dbReference type="GeneTree" id="ENSGT00940000154896"/>
<dbReference type="HOGENOM" id="CLU_006855_7_2_1"/>
<dbReference type="InParanoid" id="Q695T7"/>
<dbReference type="OMA" id="WPKELIT"/>
<dbReference type="OrthoDB" id="6581954at2759"/>
<dbReference type="PAN-GO" id="Q695T7">
    <property type="GO annotations" value="2 GO annotations based on evolutionary models"/>
</dbReference>
<dbReference type="PhylomeDB" id="Q695T7"/>
<dbReference type="TreeFam" id="TF343812"/>
<dbReference type="PathwayCommons" id="Q695T7"/>
<dbReference type="Reactome" id="R-HSA-352230">
    <property type="pathway name" value="Amino acid transport across the plasma membrane"/>
</dbReference>
<dbReference type="Reactome" id="R-HSA-442660">
    <property type="pathway name" value="Na+/Cl- dependent neurotransmitter transporters"/>
</dbReference>
<dbReference type="Reactome" id="R-HSA-5619044">
    <property type="pathway name" value="Defective SLC6A19 causes Hartnup disorder (HND)"/>
</dbReference>
<dbReference type="Reactome" id="R-HSA-5659735">
    <property type="pathway name" value="Defective SLC6A19 causes Hartnup disorder (HND)"/>
</dbReference>
<dbReference type="SignaLink" id="Q695T7"/>
<dbReference type="BioGRID-ORCS" id="340024">
    <property type="hits" value="17 hits in 1156 CRISPR screens"/>
</dbReference>
<dbReference type="ChiTaRS" id="SLC6A19">
    <property type="organism name" value="human"/>
</dbReference>
<dbReference type="GeneWiki" id="SLC6A19"/>
<dbReference type="GenomeRNAi" id="340024"/>
<dbReference type="Pharos" id="Q695T7">
    <property type="development level" value="Tchem"/>
</dbReference>
<dbReference type="PRO" id="PR:Q695T7"/>
<dbReference type="Proteomes" id="UP000005640">
    <property type="component" value="Chromosome 5"/>
</dbReference>
<dbReference type="RNAct" id="Q695T7">
    <property type="molecule type" value="protein"/>
</dbReference>
<dbReference type="Bgee" id="ENSG00000174358">
    <property type="expression patterns" value="Expressed in ileal mucosa and 57 other cell types or tissues"/>
</dbReference>
<dbReference type="ExpressionAtlas" id="Q695T7">
    <property type="expression patterns" value="baseline and differential"/>
</dbReference>
<dbReference type="GO" id="GO:0016324">
    <property type="term" value="C:apical plasma membrane"/>
    <property type="evidence" value="ECO:0000314"/>
    <property type="project" value="UniProtKB"/>
</dbReference>
<dbReference type="GO" id="GO:0031526">
    <property type="term" value="C:brush border membrane"/>
    <property type="evidence" value="ECO:0000314"/>
    <property type="project" value="ARUK-UCL"/>
</dbReference>
<dbReference type="GO" id="GO:0070062">
    <property type="term" value="C:extracellular exosome"/>
    <property type="evidence" value="ECO:0007005"/>
    <property type="project" value="UniProtKB"/>
</dbReference>
<dbReference type="GO" id="GO:0005886">
    <property type="term" value="C:plasma membrane"/>
    <property type="evidence" value="ECO:0000318"/>
    <property type="project" value="GO_Central"/>
</dbReference>
<dbReference type="GO" id="GO:0015171">
    <property type="term" value="F:amino acid transmembrane transporter activity"/>
    <property type="evidence" value="ECO:0000304"/>
    <property type="project" value="Reactome"/>
</dbReference>
<dbReference type="GO" id="GO:0015175">
    <property type="term" value="F:neutral L-amino acid transmembrane transporter activity"/>
    <property type="evidence" value="ECO:0000314"/>
    <property type="project" value="UniProtKB"/>
</dbReference>
<dbReference type="GO" id="GO:0015293">
    <property type="term" value="F:symporter activity"/>
    <property type="evidence" value="ECO:0007669"/>
    <property type="project" value="UniProtKB-KW"/>
</dbReference>
<dbReference type="GO" id="GO:0006865">
    <property type="term" value="P:amino acid transport"/>
    <property type="evidence" value="ECO:0000304"/>
    <property type="project" value="Reactome"/>
</dbReference>
<dbReference type="GO" id="GO:0015804">
    <property type="term" value="P:neutral amino acid transport"/>
    <property type="evidence" value="ECO:0000318"/>
    <property type="project" value="GO_Central"/>
</dbReference>
<dbReference type="GO" id="GO:0007584">
    <property type="term" value="P:response to nutrient"/>
    <property type="evidence" value="ECO:0007669"/>
    <property type="project" value="Ensembl"/>
</dbReference>
<dbReference type="GO" id="GO:0035725">
    <property type="term" value="P:sodium ion transmembrane transport"/>
    <property type="evidence" value="ECO:0000318"/>
    <property type="project" value="GO_Central"/>
</dbReference>
<dbReference type="GO" id="GO:0019058">
    <property type="term" value="P:viral life cycle"/>
    <property type="evidence" value="ECO:0000303"/>
    <property type="project" value="ComplexPortal"/>
</dbReference>
<dbReference type="InterPro" id="IPR000175">
    <property type="entry name" value="Na/ntran_symport"/>
</dbReference>
<dbReference type="InterPro" id="IPR002438">
    <property type="entry name" value="Neutral_aa_SLC6"/>
</dbReference>
<dbReference type="InterPro" id="IPR037272">
    <property type="entry name" value="SNS_sf"/>
</dbReference>
<dbReference type="NCBIfam" id="NF037979">
    <property type="entry name" value="Na_transp"/>
    <property type="match status" value="1"/>
</dbReference>
<dbReference type="PANTHER" id="PTHR11616:SF125">
    <property type="entry name" value="SODIUM-DEPENDENT NEUTRAL AMINO ACID TRANSPORTER B(0)AT1"/>
    <property type="match status" value="1"/>
</dbReference>
<dbReference type="PANTHER" id="PTHR11616">
    <property type="entry name" value="SODIUM/CHLORIDE DEPENDENT TRANSPORTER"/>
    <property type="match status" value="1"/>
</dbReference>
<dbReference type="Pfam" id="PF00209">
    <property type="entry name" value="SNF"/>
    <property type="match status" value="1"/>
</dbReference>
<dbReference type="PRINTS" id="PR00176">
    <property type="entry name" value="NANEUSMPORT"/>
</dbReference>
<dbReference type="PRINTS" id="PR01206">
    <property type="entry name" value="ORPHTRNSPORT"/>
</dbReference>
<dbReference type="SUPFAM" id="SSF161070">
    <property type="entry name" value="SNF-like"/>
    <property type="match status" value="1"/>
</dbReference>
<dbReference type="PROSITE" id="PS00610">
    <property type="entry name" value="NA_NEUROTRAN_SYMP_1"/>
    <property type="match status" value="1"/>
</dbReference>
<dbReference type="PROSITE" id="PS50267">
    <property type="entry name" value="NA_NEUROTRAN_SYMP_3"/>
    <property type="match status" value="1"/>
</dbReference>
<gene>
    <name type="primary">SLC6A19</name>
    <name type="synonym">B0AT1</name>
</gene>
<protein>
    <recommendedName>
        <fullName>Sodium-dependent neutral amino acid transporter B(0)AT1</fullName>
    </recommendedName>
    <alternativeName>
        <fullName>Solute carrier family 6 member 19</fullName>
    </alternativeName>
    <alternativeName>
        <fullName>System B(0) neutral amino acid transporter AT1</fullName>
    </alternativeName>
</protein>
<name>S6A19_HUMAN</name>
<keyword id="KW-0002">3D-structure</keyword>
<keyword id="KW-0029">Amino-acid transport</keyword>
<keyword id="KW-1003">Cell membrane</keyword>
<keyword id="KW-0225">Disease variant</keyword>
<keyword id="KW-0325">Glycoprotein</keyword>
<keyword id="KW-0472">Membrane</keyword>
<keyword id="KW-0597">Phosphoprotein</keyword>
<keyword id="KW-1267">Proteomics identification</keyword>
<keyword id="KW-1185">Reference proteome</keyword>
<keyword id="KW-0769">Symport</keyword>
<keyword id="KW-0812">Transmembrane</keyword>
<keyword id="KW-1133">Transmembrane helix</keyword>
<keyword id="KW-0813">Transport</keyword>
<proteinExistence type="evidence at protein level"/>
<feature type="chain" id="PRO_0000214809" description="Sodium-dependent neutral amino acid transporter B(0)AT1">
    <location>
        <begin position="1"/>
        <end position="634"/>
    </location>
</feature>
<feature type="topological domain" description="Cytoplasmic" evidence="2">
    <location>
        <begin position="1"/>
        <end position="41"/>
    </location>
</feature>
<feature type="transmembrane region" description="Helical; Name=1" evidence="2">
    <location>
        <begin position="42"/>
        <end position="62"/>
    </location>
</feature>
<feature type="topological domain" description="Extracellular" evidence="2">
    <location>
        <begin position="63"/>
        <end position="67"/>
    </location>
</feature>
<feature type="transmembrane region" description="Helical; Name=2" evidence="2">
    <location>
        <begin position="68"/>
        <end position="88"/>
    </location>
</feature>
<feature type="topological domain" description="Cytoplasmic" evidence="2">
    <location>
        <begin position="89"/>
        <end position="120"/>
    </location>
</feature>
<feature type="transmembrane region" description="Helical; Name=3" evidence="2">
    <location>
        <begin position="121"/>
        <end position="141"/>
    </location>
</feature>
<feature type="topological domain" description="Extracellular" evidence="2">
    <location>
        <begin position="142"/>
        <end position="192"/>
    </location>
</feature>
<feature type="transmembrane region" description="Helical; Name=4" evidence="2">
    <location>
        <begin position="193"/>
        <end position="213"/>
    </location>
</feature>
<feature type="topological domain" description="Cytoplasmic" evidence="2">
    <location>
        <begin position="214"/>
        <end position="221"/>
    </location>
</feature>
<feature type="transmembrane region" description="Helical; Name=5" evidence="2">
    <location>
        <begin position="222"/>
        <end position="242"/>
    </location>
</feature>
<feature type="topological domain" description="Extracellular" evidence="2">
    <location>
        <begin position="243"/>
        <end position="268"/>
    </location>
</feature>
<feature type="transmembrane region" description="Helical; Name=6" evidence="2">
    <location>
        <begin position="269"/>
        <end position="289"/>
    </location>
</feature>
<feature type="topological domain" description="Cytoplasmic" evidence="2">
    <location>
        <begin position="290"/>
        <end position="304"/>
    </location>
</feature>
<feature type="transmembrane region" description="Helical; Name=7" evidence="2">
    <location>
        <begin position="305"/>
        <end position="325"/>
    </location>
</feature>
<feature type="topological domain" description="Extracellular" evidence="2">
    <location>
        <begin position="326"/>
        <end position="413"/>
    </location>
</feature>
<feature type="transmembrane region" description="Helical; Name=8" evidence="2">
    <location>
        <begin position="414"/>
        <end position="434"/>
    </location>
</feature>
<feature type="topological domain" description="Cytoplasmic" evidence="2">
    <location>
        <begin position="435"/>
        <end position="456"/>
    </location>
</feature>
<feature type="transmembrane region" description="Helical; Name=9" evidence="2">
    <location>
        <begin position="457"/>
        <end position="477"/>
    </location>
</feature>
<feature type="topological domain" description="Extracellular" evidence="2">
    <location>
        <begin position="478"/>
        <end position="490"/>
    </location>
</feature>
<feature type="transmembrane region" description="Helical; Name=10" evidence="2">
    <location>
        <begin position="491"/>
        <end position="511"/>
    </location>
</feature>
<feature type="topological domain" description="Cytoplasmic" evidence="2">
    <location>
        <begin position="512"/>
        <end position="531"/>
    </location>
</feature>
<feature type="transmembrane region" description="Helical; Name=11" evidence="2">
    <location>
        <begin position="532"/>
        <end position="552"/>
    </location>
</feature>
<feature type="topological domain" description="Extracellular" evidence="2">
    <location>
        <begin position="553"/>
        <end position="581"/>
    </location>
</feature>
<feature type="transmembrane region" description="Helical; Name=12" evidence="2">
    <location>
        <begin position="582"/>
        <end position="602"/>
    </location>
</feature>
<feature type="topological domain" description="Cytoplasmic" evidence="2">
    <location>
        <begin position="603"/>
        <end position="634"/>
    </location>
</feature>
<feature type="modified residue" description="Phosphoserine" evidence="1">
    <location>
        <position position="17"/>
    </location>
</feature>
<feature type="modified residue" description="Phosphoserine" evidence="1">
    <location>
        <position position="627"/>
    </location>
</feature>
<feature type="glycosylation site" description="N-linked (GlcNAc...) asparagine" evidence="2">
    <location>
        <position position="158"/>
    </location>
</feature>
<feature type="glycosylation site" description="N-linked (GlcNAc...) asparagine" evidence="2">
    <location>
        <position position="182"/>
    </location>
</feature>
<feature type="glycosylation site" description="N-linked (GlcNAc...) asparagine" evidence="2">
    <location>
        <position position="258"/>
    </location>
</feature>
<feature type="glycosylation site" description="N-linked (GlcNAc...) asparagine" evidence="2">
    <location>
        <position position="354"/>
    </location>
</feature>
<feature type="glycosylation site" description="N-linked (GlcNAc...) asparagine" evidence="2">
    <location>
        <position position="368"/>
    </location>
</feature>
<feature type="sequence variant" id="VAR_023314" description="In HND; no amino acid transport activity when expressed alone or coexpressed with CLTRN or ACE2; loss of surface expression when expressed alone or coexpressed with CLTRN or ACE2; dbSNP:rs762989809." evidence="3 8">
    <original>R</original>
    <variation>C</variation>
    <location>
        <position position="57"/>
    </location>
</feature>
<feature type="sequence variant" id="VAR_081070" description="In HND; abolishes amino acid transport activity; dbSNP:rs1251095994." evidence="6">
    <original>G</original>
    <variation>R</variation>
    <location>
        <position position="66"/>
    </location>
</feature>
<feature type="sequence variant" id="VAR_081071" description="In HND; increases cell membrane localization in presence of ACE2 or CLTRN; does not affect interaction with ACE2; amino acid transport activity is not activated in presence of ACE2 or CLTRN; dbSNP:rs1745926443." evidence="8">
    <original>A</original>
    <variation>T</variation>
    <location>
        <position position="69"/>
    </location>
</feature>
<feature type="sequence variant" id="VAR_081072" description="In HND; no amino acid transport activity when expressed alone or coexpressed with CLTRN or ACE2; increases surface cell expression when expressed alone or coexpressed with CLTRN or ACE2; dbSNP:rs757679627." evidence="6 8">
    <original>G</original>
    <variation>R</variation>
    <location>
        <position position="93"/>
    </location>
</feature>
<feature type="sequence variant" id="VAR_023315" description="In HND; population allele frequency among Europeans is 0.007; reduced transport activity by 50% but does not completely inactivates the transporter; coexpression with ACE2 increased the transport rate whereas coexpression with CLTRN has the opposite effect; does not affect interaction with ACE2; decreased cell membrane localization in presence of CLTRN; dbSNP:rs121434346." evidence="4 6">
    <original>D</original>
    <variation>N</variation>
    <location>
        <position position="173"/>
    </location>
</feature>
<feature type="sequence variant" id="VAR_081073" description="In HND; abolishes amino acid transport activity." evidence="6">
    <location>
        <begin position="178"/>
        <end position="634"/>
    </location>
</feature>
<feature type="sequence variant" id="VAR_023316" description="In HND; does not affect amino acid transport activity when expressed alone; decreases amino acid transport activity in presence of ACE2 or CLTRN; decreased surface cell expression when expressed with CLTRN or ACE2; dbSNP:rs758492838." evidence="4 5 6 8">
    <original>R</original>
    <variation>Q</variation>
    <location>
        <position position="240"/>
    </location>
</feature>
<feature type="sequence variant" id="VAR_023317" description="In HND; no amino acid transport activity when expressed alone or coexpressed with CLTRN or ACE2; loss of surface expression when expressed coexpressed with CLTRN or ACE2; dbSNP:rs200745023." evidence="4 8">
    <original>L</original>
    <variation>P</variation>
    <location>
        <position position="242"/>
    </location>
</feature>
<feature type="sequence variant" id="VAR_023318" description="Does not affect cell membrane localization; does not affect amino acid transport activity; dbSNP:rs7732589." evidence="4 8">
    <original>V</original>
    <variation>I</variation>
    <location>
        <position position="252"/>
    </location>
</feature>
<feature type="sequence variant" id="VAR_081074" description="In HND; does not affect interaction with ACE2; coexpression with ACE2 increased the transport rate whereas coexpression with CLTRN has the opposite effect; dbSNP:rs148139045." evidence="8">
    <original>P</original>
    <variation>L</variation>
    <location>
        <position position="265"/>
    </location>
</feature>
<feature type="sequence variant" id="VAR_081075" description="In HND; abolishes amino acid transport activity; dbSNP:rs200842846." evidence="6">
    <original>G</original>
    <variation>R</variation>
    <location>
        <position position="284"/>
    </location>
</feature>
<feature type="sequence variant" id="VAR_081076" description="In HND; abolishes amino acid transport activity; dbSNP:rs142164435." evidence="6">
    <original>R</original>
    <variation>C</variation>
    <location>
        <position position="328"/>
    </location>
</feature>
<feature type="sequence variant" id="VAR_081077" description="In HND; abolishes amino acid transport activity; dbSNP:rs765501634." evidence="6">
    <original>E</original>
    <variation>K</variation>
    <location>
        <position position="405"/>
    </location>
</feature>
<feature type="sequence variant" id="VAR_023319" description="In HND; no amino acid transport activity when expressed alone or coexpressed with CLTRN or ACE2; loss of surface expression when expressed alone or coexpressed with CLTRN or ACE2; dbSNP:rs1236852017." evidence="4 8">
    <original>E</original>
    <variation>K</variation>
    <location>
        <position position="501"/>
    </location>
</feature>
<feature type="sequence variant" id="VAR_081078" description="In HND; abolishes amino acid transport activity; dbSNP:rs745524993." evidence="6">
    <original>D</original>
    <variation>G</variation>
    <location>
        <position position="517"/>
    </location>
</feature>
<feature type="sequence variant" id="VAR_081079" description="In HND; no amino acid transport activity when expressed alone or coexpressed with CLTRN or ACE2; loss of surface expression when expressed alone or coexpressed with CLTRN or ACE2; dbSNP:rs751554174." evidence="8">
    <original>P</original>
    <variation>L</variation>
    <location>
        <position position="579"/>
    </location>
</feature>
<feature type="strand" evidence="17">
    <location>
        <begin position="9"/>
        <end position="11"/>
    </location>
</feature>
<feature type="turn" evidence="14">
    <location>
        <begin position="12"/>
        <end position="14"/>
    </location>
</feature>
<feature type="strand" evidence="14">
    <location>
        <begin position="18"/>
        <end position="20"/>
    </location>
</feature>
<feature type="helix" evidence="14">
    <location>
        <begin position="21"/>
        <end position="24"/>
    </location>
</feature>
<feature type="turn" evidence="17">
    <location>
        <begin position="25"/>
        <end position="27"/>
    </location>
</feature>
<feature type="turn" evidence="14">
    <location>
        <begin position="29"/>
        <end position="31"/>
    </location>
</feature>
<feature type="helix" evidence="14">
    <location>
        <begin position="38"/>
        <end position="48"/>
    </location>
</feature>
<feature type="strand" evidence="14">
    <location>
        <begin position="49"/>
        <end position="57"/>
    </location>
</feature>
<feature type="helix" evidence="14">
    <location>
        <begin position="58"/>
        <end position="64"/>
    </location>
</feature>
<feature type="turn" evidence="15">
    <location>
        <begin position="65"/>
        <end position="70"/>
    </location>
</feature>
<feature type="helix" evidence="14">
    <location>
        <begin position="71"/>
        <end position="80"/>
    </location>
</feature>
<feature type="helix" evidence="14">
    <location>
        <begin position="82"/>
        <end position="96"/>
    </location>
</feature>
<feature type="helix" evidence="14">
    <location>
        <begin position="101"/>
        <end position="104"/>
    </location>
</feature>
<feature type="turn" evidence="14">
    <location>
        <begin position="109"/>
        <end position="112"/>
    </location>
</feature>
<feature type="helix" evidence="14">
    <location>
        <begin position="113"/>
        <end position="141"/>
    </location>
</feature>
<feature type="strand" evidence="14">
    <location>
        <begin position="144"/>
        <end position="147"/>
    </location>
</feature>
<feature type="helix" evidence="16">
    <location>
        <begin position="149"/>
        <end position="151"/>
    </location>
</feature>
<feature type="strand" evidence="15">
    <location>
        <begin position="157"/>
        <end position="162"/>
    </location>
</feature>
<feature type="helix" evidence="14">
    <location>
        <begin position="164"/>
        <end position="168"/>
    </location>
</feature>
<feature type="helix" evidence="14">
    <location>
        <begin position="173"/>
        <end position="176"/>
    </location>
</feature>
<feature type="turn" evidence="14">
    <location>
        <begin position="177"/>
        <end position="180"/>
    </location>
</feature>
<feature type="strand" evidence="15">
    <location>
        <begin position="185"/>
        <end position="188"/>
    </location>
</feature>
<feature type="helix" evidence="14">
    <location>
        <begin position="196"/>
        <end position="211"/>
    </location>
</feature>
<feature type="strand" evidence="14">
    <location>
        <begin position="212"/>
        <end position="215"/>
    </location>
</feature>
<feature type="turn" evidence="14">
    <location>
        <begin position="216"/>
        <end position="218"/>
    </location>
</feature>
<feature type="helix" evidence="14">
    <location>
        <begin position="219"/>
        <end position="241"/>
    </location>
</feature>
<feature type="strand" evidence="14">
    <location>
        <begin position="244"/>
        <end position="246"/>
    </location>
</feature>
<feature type="strand" evidence="14">
    <location>
        <begin position="248"/>
        <end position="250"/>
    </location>
</feature>
<feature type="helix" evidence="14">
    <location>
        <begin position="251"/>
        <end position="255"/>
    </location>
</feature>
<feature type="helix" evidence="14">
    <location>
        <begin position="259"/>
        <end position="263"/>
    </location>
</feature>
<feature type="helix" evidence="14">
    <location>
        <begin position="266"/>
        <end position="278"/>
    </location>
</feature>
<feature type="strand" evidence="14">
    <location>
        <begin position="282"/>
        <end position="284"/>
    </location>
</feature>
<feature type="helix" evidence="14">
    <location>
        <begin position="285"/>
        <end position="290"/>
    </location>
</feature>
<feature type="helix" evidence="14">
    <location>
        <begin position="301"/>
        <end position="316"/>
    </location>
</feature>
<feature type="helix" evidence="14">
    <location>
        <begin position="318"/>
        <end position="345"/>
    </location>
</feature>
<feature type="turn" evidence="14">
    <location>
        <begin position="346"/>
        <end position="349"/>
    </location>
</feature>
<feature type="helix" evidence="16">
    <location>
        <begin position="352"/>
        <end position="354"/>
    </location>
</feature>
<feature type="strand" evidence="16">
    <location>
        <begin position="357"/>
        <end position="359"/>
    </location>
</feature>
<feature type="helix" evidence="14">
    <location>
        <begin position="360"/>
        <end position="370"/>
    </location>
</feature>
<feature type="turn" evidence="14">
    <location>
        <begin position="372"/>
        <end position="376"/>
    </location>
</feature>
<feature type="strand" evidence="14">
    <location>
        <begin position="387"/>
        <end position="391"/>
    </location>
</feature>
<feature type="strand" evidence="16">
    <location>
        <begin position="395"/>
        <end position="398"/>
    </location>
</feature>
<feature type="turn" evidence="14">
    <location>
        <begin position="399"/>
        <end position="402"/>
    </location>
</feature>
<feature type="helix" evidence="14">
    <location>
        <begin position="403"/>
        <end position="407"/>
    </location>
</feature>
<feature type="turn" evidence="14">
    <location>
        <begin position="411"/>
        <end position="414"/>
    </location>
</feature>
<feature type="helix" evidence="14">
    <location>
        <begin position="415"/>
        <end position="429"/>
    </location>
</feature>
<feature type="helix" evidence="14">
    <location>
        <begin position="431"/>
        <end position="444"/>
    </location>
</feature>
<feature type="turn" evidence="14">
    <location>
        <begin position="445"/>
        <end position="447"/>
    </location>
</feature>
<feature type="strand" evidence="17">
    <location>
        <begin position="451"/>
        <end position="453"/>
    </location>
</feature>
<feature type="helix" evidence="14">
    <location>
        <begin position="455"/>
        <end position="469"/>
    </location>
</feature>
<feature type="helix" evidence="14">
    <location>
        <begin position="470"/>
        <end position="473"/>
    </location>
</feature>
<feature type="helix" evidence="14">
    <location>
        <begin position="478"/>
        <end position="506"/>
    </location>
</feature>
<feature type="turn" evidence="14">
    <location>
        <begin position="507"/>
        <end position="510"/>
    </location>
</feature>
<feature type="helix" evidence="14">
    <location>
        <begin position="511"/>
        <end position="521"/>
    </location>
</feature>
<feature type="helix" evidence="14">
    <location>
        <begin position="528"/>
        <end position="535"/>
    </location>
</feature>
<feature type="helix" evidence="14">
    <location>
        <begin position="537"/>
        <end position="545"/>
    </location>
</feature>
<feature type="helix" evidence="14">
    <location>
        <begin position="547"/>
        <end position="553"/>
    </location>
</feature>
<feature type="strand" evidence="14">
    <location>
        <begin position="554"/>
        <end position="556"/>
    </location>
</feature>
<feature type="strand" evidence="14">
    <location>
        <begin position="559"/>
        <end position="562"/>
    </location>
</feature>
<feature type="strand" evidence="14">
    <location>
        <begin position="567"/>
        <end position="569"/>
    </location>
</feature>
<feature type="strand" evidence="14">
    <location>
        <begin position="574"/>
        <end position="577"/>
    </location>
</feature>
<feature type="helix" evidence="14">
    <location>
        <begin position="582"/>
        <end position="608"/>
    </location>
</feature>
<accession>Q695T7</accession>
<accession>A8K446</accession>
<reference key="1">
    <citation type="journal article" date="2004" name="Nat. Genet.">
        <title>Mutations in SLC6A19, encoding B(0)AT1, cause Hartnup disorder.</title>
        <authorList>
            <person name="Kleta R."/>
            <person name="Romeo E."/>
            <person name="Ristic Z."/>
            <person name="Ohura T."/>
            <person name="Stuart C."/>
            <person name="Arcos-Burgos M."/>
            <person name="Dave M.H."/>
            <person name="Wagner C.A."/>
            <person name="Camargo S.R.M."/>
            <person name="Inoue S."/>
            <person name="Matsuura N."/>
            <person name="Helip-Wooley A."/>
            <person name="Bockenhauer D."/>
            <person name="Warth R."/>
            <person name="Bernardini I."/>
            <person name="Visser G."/>
            <person name="Eggermann T."/>
            <person name="Lee P."/>
            <person name="Chairoungdua A."/>
            <person name="Jutabha P."/>
            <person name="Babu E."/>
            <person name="Nilwarangkoon S."/>
            <person name="Anzai N."/>
            <person name="Kanai Y."/>
            <person name="Verrey F."/>
            <person name="Gahl W.A."/>
            <person name="Koizumi A."/>
        </authorList>
    </citation>
    <scope>NUCLEOTIDE SEQUENCE [MRNA]</scope>
    <scope>FUNCTION</scope>
    <scope>TRANSPORTER ACTIVITY</scope>
    <scope>TISSUE SPECIFICITY</scope>
    <scope>VARIANT HND CYS-57</scope>
    <scope>CHARACTERIZATION OF VARIANT HND CYS-57</scope>
</reference>
<reference key="2">
    <citation type="journal article" date="2004" name="Nat. Genet.">
        <title>Hartnup disorder is caused by mutations in the gene encoding the neutral amino acid transporter SLC6A19.</title>
        <authorList>
            <person name="Seow H.F."/>
            <person name="Broeer S."/>
            <person name="Broeer A."/>
            <person name="Bailey C.G."/>
            <person name="Potter S.J."/>
            <person name="Cavanaugh J.A."/>
            <person name="Rasko J.E.J."/>
        </authorList>
    </citation>
    <scope>NUCLEOTIDE SEQUENCE [MRNA]</scope>
    <scope>FUNCTION</scope>
    <scope>TRANSPORTER ACTIVITY</scope>
    <scope>TISSUE SPECIFICITY</scope>
    <scope>VARIANTS HND ASN-173; GLN-240; PRO-242 AND LYS-501</scope>
    <scope>CHARACTERIZATION OF VARIANTS HND ASN-173; GLN-240; PRO-242 AND LYS-501</scope>
    <scope>VARIANTS GLN-240 AND ILE-252</scope>
    <scope>CHARACTERIZATION OF VARIANT ILE-252</scope>
</reference>
<reference key="3">
    <citation type="journal article" date="2004" name="Nat. Genet.">
        <title>Complete sequencing and characterization of 21,243 full-length human cDNAs.</title>
        <authorList>
            <person name="Ota T."/>
            <person name="Suzuki Y."/>
            <person name="Nishikawa T."/>
            <person name="Otsuki T."/>
            <person name="Sugiyama T."/>
            <person name="Irie R."/>
            <person name="Wakamatsu A."/>
            <person name="Hayashi K."/>
            <person name="Sato H."/>
            <person name="Nagai K."/>
            <person name="Kimura K."/>
            <person name="Makita H."/>
            <person name="Sekine M."/>
            <person name="Obayashi M."/>
            <person name="Nishi T."/>
            <person name="Shibahara T."/>
            <person name="Tanaka T."/>
            <person name="Ishii S."/>
            <person name="Yamamoto J."/>
            <person name="Saito K."/>
            <person name="Kawai Y."/>
            <person name="Isono Y."/>
            <person name="Nakamura Y."/>
            <person name="Nagahari K."/>
            <person name="Murakami K."/>
            <person name="Yasuda T."/>
            <person name="Iwayanagi T."/>
            <person name="Wagatsuma M."/>
            <person name="Shiratori A."/>
            <person name="Sudo H."/>
            <person name="Hosoiri T."/>
            <person name="Kaku Y."/>
            <person name="Kodaira H."/>
            <person name="Kondo H."/>
            <person name="Sugawara M."/>
            <person name="Takahashi M."/>
            <person name="Kanda K."/>
            <person name="Yokoi T."/>
            <person name="Furuya T."/>
            <person name="Kikkawa E."/>
            <person name="Omura Y."/>
            <person name="Abe K."/>
            <person name="Kamihara K."/>
            <person name="Katsuta N."/>
            <person name="Sato K."/>
            <person name="Tanikawa M."/>
            <person name="Yamazaki M."/>
            <person name="Ninomiya K."/>
            <person name="Ishibashi T."/>
            <person name="Yamashita H."/>
            <person name="Murakawa K."/>
            <person name="Fujimori K."/>
            <person name="Tanai H."/>
            <person name="Kimata M."/>
            <person name="Watanabe M."/>
            <person name="Hiraoka S."/>
            <person name="Chiba Y."/>
            <person name="Ishida S."/>
            <person name="Ono Y."/>
            <person name="Takiguchi S."/>
            <person name="Watanabe S."/>
            <person name="Yosida M."/>
            <person name="Hotuta T."/>
            <person name="Kusano J."/>
            <person name="Kanehori K."/>
            <person name="Takahashi-Fujii A."/>
            <person name="Hara H."/>
            <person name="Tanase T.-O."/>
            <person name="Nomura Y."/>
            <person name="Togiya S."/>
            <person name="Komai F."/>
            <person name="Hara R."/>
            <person name="Takeuchi K."/>
            <person name="Arita M."/>
            <person name="Imose N."/>
            <person name="Musashino K."/>
            <person name="Yuuki H."/>
            <person name="Oshima A."/>
            <person name="Sasaki N."/>
            <person name="Aotsuka S."/>
            <person name="Yoshikawa Y."/>
            <person name="Matsunawa H."/>
            <person name="Ichihara T."/>
            <person name="Shiohata N."/>
            <person name="Sano S."/>
            <person name="Moriya S."/>
            <person name="Momiyama H."/>
            <person name="Satoh N."/>
            <person name="Takami S."/>
            <person name="Terashima Y."/>
            <person name="Suzuki O."/>
            <person name="Nakagawa S."/>
            <person name="Senoh A."/>
            <person name="Mizoguchi H."/>
            <person name="Goto Y."/>
            <person name="Shimizu F."/>
            <person name="Wakebe H."/>
            <person name="Hishigaki H."/>
            <person name="Watanabe T."/>
            <person name="Sugiyama A."/>
            <person name="Takemoto M."/>
            <person name="Kawakami B."/>
            <person name="Yamazaki M."/>
            <person name="Watanabe K."/>
            <person name="Kumagai A."/>
            <person name="Itakura S."/>
            <person name="Fukuzumi Y."/>
            <person name="Fujimori Y."/>
            <person name="Komiyama M."/>
            <person name="Tashiro H."/>
            <person name="Tanigami A."/>
            <person name="Fujiwara T."/>
            <person name="Ono T."/>
            <person name="Yamada K."/>
            <person name="Fujii Y."/>
            <person name="Ozaki K."/>
            <person name="Hirao M."/>
            <person name="Ohmori Y."/>
            <person name="Kawabata A."/>
            <person name="Hikiji T."/>
            <person name="Kobatake N."/>
            <person name="Inagaki H."/>
            <person name="Ikema Y."/>
            <person name="Okamoto S."/>
            <person name="Okitani R."/>
            <person name="Kawakami T."/>
            <person name="Noguchi S."/>
            <person name="Itoh T."/>
            <person name="Shigeta K."/>
            <person name="Senba T."/>
            <person name="Matsumura K."/>
            <person name="Nakajima Y."/>
            <person name="Mizuno T."/>
            <person name="Morinaga M."/>
            <person name="Sasaki M."/>
            <person name="Togashi T."/>
            <person name="Oyama M."/>
            <person name="Hata H."/>
            <person name="Watanabe M."/>
            <person name="Komatsu T."/>
            <person name="Mizushima-Sugano J."/>
            <person name="Satoh T."/>
            <person name="Shirai Y."/>
            <person name="Takahashi Y."/>
            <person name="Nakagawa K."/>
            <person name="Okumura K."/>
            <person name="Nagase T."/>
            <person name="Nomura N."/>
            <person name="Kikuchi H."/>
            <person name="Masuho Y."/>
            <person name="Yamashita R."/>
            <person name="Nakai K."/>
            <person name="Yada T."/>
            <person name="Nakamura Y."/>
            <person name="Ohara O."/>
            <person name="Isogai T."/>
            <person name="Sugano S."/>
        </authorList>
    </citation>
    <scope>NUCLEOTIDE SEQUENCE [LARGE SCALE MRNA]</scope>
    <source>
        <tissue>Kidney</tissue>
    </source>
</reference>
<reference key="4">
    <citation type="submission" date="2005-09" db="EMBL/GenBank/DDBJ databases">
        <authorList>
            <person name="Mural R.J."/>
            <person name="Istrail S."/>
            <person name="Sutton G.G."/>
            <person name="Florea L."/>
            <person name="Halpern A.L."/>
            <person name="Mobarry C.M."/>
            <person name="Lippert R."/>
            <person name="Walenz B."/>
            <person name="Shatkay H."/>
            <person name="Dew I."/>
            <person name="Miller J.R."/>
            <person name="Flanigan M.J."/>
            <person name="Edwards N.J."/>
            <person name="Bolanos R."/>
            <person name="Fasulo D."/>
            <person name="Halldorsson B.V."/>
            <person name="Hannenhalli S."/>
            <person name="Turner R."/>
            <person name="Yooseph S."/>
            <person name="Lu F."/>
            <person name="Nusskern D.R."/>
            <person name="Shue B.C."/>
            <person name="Zheng X.H."/>
            <person name="Zhong F."/>
            <person name="Delcher A.L."/>
            <person name="Huson D.H."/>
            <person name="Kravitz S.A."/>
            <person name="Mouchard L."/>
            <person name="Reinert K."/>
            <person name="Remington K.A."/>
            <person name="Clark A.G."/>
            <person name="Waterman M.S."/>
            <person name="Eichler E.E."/>
            <person name="Adams M.D."/>
            <person name="Hunkapiller M.W."/>
            <person name="Myers E.W."/>
            <person name="Venter J.C."/>
        </authorList>
    </citation>
    <scope>NUCLEOTIDE SEQUENCE [LARGE SCALE GENOMIC DNA]</scope>
</reference>
<reference key="5">
    <citation type="journal article" date="2008" name="J. Clin. Invest.">
        <title>Iminoglycinuria and hyperglycinuria are discrete human phenotypes resulting from complex mutations in proline and glycine transporters.</title>
        <authorList>
            <person name="Broer S."/>
            <person name="Bailey C.G."/>
            <person name="Kowalczuk S."/>
            <person name="Ng C."/>
            <person name="Vanslambrouck J.M."/>
            <person name="Rodgers H."/>
            <person name="Auray-Blais C."/>
            <person name="Cavanaugh J.A."/>
            <person name="Broer A."/>
            <person name="Rasko J.E."/>
        </authorList>
    </citation>
    <scope>INVOLVEMENT IN HGLY AND IG</scope>
</reference>
<reference key="6">
    <citation type="journal article" date="2008" name="FASEB J.">
        <title>A protein complex in the brush-border membrane explains a Hartnup disorder allele.</title>
        <authorList>
            <person name="Kowalczuk S."/>
            <person name="Broeer A."/>
            <person name="Tietze N."/>
            <person name="Vanslambrouck J.M."/>
            <person name="Rasko J.E."/>
            <person name="Broeer S."/>
        </authorList>
    </citation>
    <scope>FUNCTION</scope>
    <scope>SUBCELLULAR LOCATION</scope>
    <scope>TISSUE SPECIFICITY</scope>
    <scope>CHARACTERIZATION OF VARIANT HND GLN-240</scope>
</reference>
<reference key="7">
    <citation type="journal article" date="2008" name="Hum. Mutat.">
        <title>Further evidence for allelic heterogeneity in Hartnup disorder.</title>
        <authorList>
            <person name="Azmanov D.N."/>
            <person name="Kowalczuk S."/>
            <person name="Rodgers H."/>
            <person name="Auray-Blais C."/>
            <person name="Giguere R."/>
            <person name="Rasko J.E."/>
            <person name="Broeer S."/>
            <person name="Cavanaugh J.A."/>
        </authorList>
    </citation>
    <scope>VARIANTS HND ARG-66; ARG-93; ASN-173; 178-ARG--TYR-634 DEL; GLN-240; ARG-284; CYS-328; LYS-405 AND GLY-517</scope>
    <scope>CHARACTERIZATION OF VARIANTS HND ARG-66; ARG-93; 178-ARG--TYR-634 DEL; ARG-284; CYS-328; LYS-405 AND GLY-517</scope>
    <scope>FUNCTION</scope>
    <scope>SUBCELLULAR LOCATION</scope>
</reference>
<reference key="8">
    <citation type="journal article" date="2009" name="Gastroenterology">
        <title>Tissue-specific amino acid transporter partners ACE2 and collectrin differentially interact with hartnup mutations.</title>
        <authorList>
            <person name="Camargo S.M."/>
            <person name="Singer D."/>
            <person name="Makrides V."/>
            <person name="Huggel K."/>
            <person name="Pos K.M."/>
            <person name="Wagner C.A."/>
            <person name="Kuba K."/>
            <person name="Danilczyk U."/>
            <person name="Skovby F."/>
            <person name="Kleta R."/>
            <person name="Penninger J.M."/>
            <person name="Verrey F."/>
        </authorList>
    </citation>
    <scope>FUNCTION</scope>
    <scope>SUBCELLULAR LOCATION</scope>
    <scope>VARIANTS HND THR-69; ARG-93; LEU-265 AND LEU-579</scope>
    <scope>CHARACTERIZATION OF VARIANTS HND CYS-57; THR-69; ARG-93; PRO-242 AND LYS-501 AND PRO-579</scope>
    <scope>CHARACTERIZATION OF VARIANTS GLN-240 AND ILE-252</scope>
</reference>
<reference key="9">
    <citation type="journal article" date="2015" name="J. Biol. Chem.">
        <title>Molecular basis for the interaction of the mammalian amino acid transporters B0AT1 and B0AT3 with their ancillary protein collectrin.</title>
        <authorList>
            <person name="Fairweather S.J."/>
            <person name="Broeer A."/>
            <person name="Subramanian N."/>
            <person name="Tumer E."/>
            <person name="Cheng Q."/>
            <person name="Schmoll D."/>
            <person name="O'Mara M.L."/>
            <person name="Broeer S."/>
        </authorList>
    </citation>
    <scope>FUNCTION</scope>
    <scope>SUBCELLULAR LOCATION</scope>
</reference>
<reference evidence="12 13" key="10">
    <citation type="journal article" date="2020" name="Science">
        <title>Structural basis for the recognition of the SARS-CoV-2 by full-length human ACE2.</title>
        <authorList>
            <person name="Yan R."/>
            <person name="Zhang Y."/>
            <person name="Li Y."/>
            <person name="Xia L."/>
            <person name="Guo Y."/>
            <person name="Zhou Q."/>
        </authorList>
    </citation>
    <scope>STRUCTURE BY ELECTRON MICROSCOPY (2.90 ANGSTROMS) OF 2-634</scope>
    <scope>INTERACTION WITH ACE2</scope>
</reference>
<organism>
    <name type="scientific">Homo sapiens</name>
    <name type="common">Human</name>
    <dbReference type="NCBI Taxonomy" id="9606"/>
    <lineage>
        <taxon>Eukaryota</taxon>
        <taxon>Metazoa</taxon>
        <taxon>Chordata</taxon>
        <taxon>Craniata</taxon>
        <taxon>Vertebrata</taxon>
        <taxon>Euteleostomi</taxon>
        <taxon>Mammalia</taxon>
        <taxon>Eutheria</taxon>
        <taxon>Euarchontoglires</taxon>
        <taxon>Primates</taxon>
        <taxon>Haplorrhini</taxon>
        <taxon>Catarrhini</taxon>
        <taxon>Hominidae</taxon>
        <taxon>Homo</taxon>
    </lineage>
</organism>
<evidence type="ECO:0000250" key="1">
    <source>
        <dbReference type="UniProtKB" id="Q9D687"/>
    </source>
</evidence>
<evidence type="ECO:0000255" key="2"/>
<evidence type="ECO:0000269" key="3">
    <source>
    </source>
</evidence>
<evidence type="ECO:0000269" key="4">
    <source>
    </source>
</evidence>
<evidence type="ECO:0000269" key="5">
    <source>
    </source>
</evidence>
<evidence type="ECO:0000269" key="6">
    <source>
    </source>
</evidence>
<evidence type="ECO:0000269" key="7">
    <source>
    </source>
</evidence>
<evidence type="ECO:0000269" key="8">
    <source>
    </source>
</evidence>
<evidence type="ECO:0000269" key="9">
    <source>
    </source>
</evidence>
<evidence type="ECO:0000269" key="10">
    <source>
    </source>
</evidence>
<evidence type="ECO:0000305" key="11"/>
<evidence type="ECO:0007744" key="12">
    <source>
        <dbReference type="PDB" id="6M18"/>
    </source>
</evidence>
<evidence type="ECO:0007744" key="13">
    <source>
        <dbReference type="PDB" id="6M1D"/>
    </source>
</evidence>
<evidence type="ECO:0007829" key="14">
    <source>
        <dbReference type="PDB" id="6M17"/>
    </source>
</evidence>
<evidence type="ECO:0007829" key="15">
    <source>
        <dbReference type="PDB" id="6M18"/>
    </source>
</evidence>
<evidence type="ECO:0007829" key="16">
    <source>
        <dbReference type="PDB" id="8I93"/>
    </source>
</evidence>
<evidence type="ECO:0007829" key="17">
    <source>
        <dbReference type="PDB" id="8WBY"/>
    </source>
</evidence>
<sequence length="634" mass="71110">MVRLVLPNPGLDARIPSLAELETIEQEEASSRPKWDNKAQYMLTCLGFCVGLGNVWRFPYLCQSHGGGAFMIPFLILLVLEGIPLLYLEFAIGQRLRRGSLGVWSSIHPALKGLGLASMLTSFMVGLYYNTIISWIMWYLFNSFQEPLPWSDCPLNENQTGYVDECARSSPVDYFWYRETLNISTSISDSGSIQWWMLLCLACAWSVLYMCTIRGIETTGKAVYITSTLPYVVLTIFLIRGLTLKGATNGIVFLFTPNVTELAQPDTWLDAGAQVFFSFSLAFGGLISFSSYNSVHNNCEKDSVIVSIINGFTSVYVAIVVYSVIGFRATQRYDDCFSTNILTLINGFDLPEGNVTQENFVDMQQRCNASDPAAYAQLVFQTCDINAFLSEAVEGTGLAFIVFTEAITKMPLSPLWSVLFFIMLFCLGLSSMFGNMEGVVVPLQDLRVIPPKWPKEVLTGLICLGTFLIGFIFTLNSGQYWLSLLDSYAGSIPLLIIAFCEMFSVVYVYGVDRFNKDIEFMIGHKPNIFWQVTWRVVSPLLMLIIFLFFFVVEVSQELTYSIWDPGYEEFPKSQKISYPNWVYVVVVIVAGVPSLTIPGYAIYKLIRNHCQKPGDHQGLVSTLSTASMNGDLKY</sequence>